<protein>
    <recommendedName>
        <fullName>MICOS complex subunit MIC12</fullName>
    </recommendedName>
    <alternativeName>
        <fullName>Altered inheritance of mitochondria protein 5, mitochondrial</fullName>
    </alternativeName>
    <alternativeName>
        <fullName>Found in mitochondrial proteome protein 51</fullName>
    </alternativeName>
</protein>
<gene>
    <name type="primary">AIM5</name>
    <name type="synonym">FMP51</name>
    <name type="ORF">SCY_0472</name>
</gene>
<proteinExistence type="inferred from homology"/>
<reference key="1">
    <citation type="journal article" date="2007" name="Proc. Natl. Acad. Sci. U.S.A.">
        <title>Genome sequencing and comparative analysis of Saccharomyces cerevisiae strain YJM789.</title>
        <authorList>
            <person name="Wei W."/>
            <person name="McCusker J.H."/>
            <person name="Hyman R.W."/>
            <person name="Jones T."/>
            <person name="Ning Y."/>
            <person name="Cao Z."/>
            <person name="Gu Z."/>
            <person name="Bruno D."/>
            <person name="Miranda M."/>
            <person name="Nguyen M."/>
            <person name="Wilhelmy J."/>
            <person name="Komp C."/>
            <person name="Tamse R."/>
            <person name="Wang X."/>
            <person name="Jia P."/>
            <person name="Luedi P."/>
            <person name="Oefner P.J."/>
            <person name="David L."/>
            <person name="Dietrich F.S."/>
            <person name="Li Y."/>
            <person name="Davis R.W."/>
            <person name="Steinmetz L.M."/>
        </authorList>
    </citation>
    <scope>NUCLEOTIDE SEQUENCE [LARGE SCALE GENOMIC DNA]</scope>
    <source>
        <strain>YJM789</strain>
    </source>
</reference>
<organism>
    <name type="scientific">Saccharomyces cerevisiae (strain YJM789)</name>
    <name type="common">Baker's yeast</name>
    <dbReference type="NCBI Taxonomy" id="307796"/>
    <lineage>
        <taxon>Eukaryota</taxon>
        <taxon>Fungi</taxon>
        <taxon>Dikarya</taxon>
        <taxon>Ascomycota</taxon>
        <taxon>Saccharomycotina</taxon>
        <taxon>Saccharomycetes</taxon>
        <taxon>Saccharomycetales</taxon>
        <taxon>Saccharomycetaceae</taxon>
        <taxon>Saccharomyces</taxon>
    </lineage>
</organism>
<comment type="function">
    <text evidence="1">Component of the MICOS complex, a large protein complex of the mitochondrial inner membrane that plays crucial roles in the maintenance of crista junctions, inner membrane architecture, and formation of contact sites to the outer membrane.</text>
</comment>
<comment type="subunit">
    <text evidence="1">Component of the mitochondrial contact site and cristae organizing system (MICOS) complex.</text>
</comment>
<comment type="subcellular location">
    <subcellularLocation>
        <location evidence="1">Mitochondrion inner membrane</location>
        <topology evidence="1">Single-pass membrane protein</topology>
    </subcellularLocation>
</comment>
<comment type="similarity">
    <text evidence="3">Belongs to the MICOS complex subunit Mic12 family.</text>
</comment>
<feature type="chain" id="PRO_0000399895" description="MICOS complex subunit MIC12">
    <location>
        <begin position="1"/>
        <end position="106"/>
    </location>
</feature>
<feature type="transmembrane region" description="Helical" evidence="2">
    <location>
        <begin position="11"/>
        <end position="27"/>
    </location>
</feature>
<name>MIC12_YEAS7</name>
<keyword id="KW-0472">Membrane</keyword>
<keyword id="KW-0496">Mitochondrion</keyword>
<keyword id="KW-0999">Mitochondrion inner membrane</keyword>
<keyword id="KW-0812">Transmembrane</keyword>
<keyword id="KW-1133">Transmembrane helix</keyword>
<evidence type="ECO:0000250" key="1"/>
<evidence type="ECO:0000255" key="2"/>
<evidence type="ECO:0000305" key="3"/>
<accession>A6ZLK2</accession>
<dbReference type="EMBL" id="AAFW02000011">
    <property type="protein sequence ID" value="EDN64871.1"/>
    <property type="molecule type" value="Genomic_DNA"/>
</dbReference>
<dbReference type="SMR" id="A6ZLK2"/>
<dbReference type="HOGENOM" id="CLU_164154_0_0_1"/>
<dbReference type="Proteomes" id="UP000007060">
    <property type="component" value="Unassembled WGS sequence"/>
</dbReference>
<dbReference type="GO" id="GO:0061617">
    <property type="term" value="C:MICOS complex"/>
    <property type="evidence" value="ECO:0007669"/>
    <property type="project" value="InterPro"/>
</dbReference>
<dbReference type="GO" id="GO:0044284">
    <property type="term" value="C:mitochondrial crista junction"/>
    <property type="evidence" value="ECO:0007669"/>
    <property type="project" value="InterPro"/>
</dbReference>
<dbReference type="GO" id="GO:0042407">
    <property type="term" value="P:cristae formation"/>
    <property type="evidence" value="ECO:0007669"/>
    <property type="project" value="InterPro"/>
</dbReference>
<dbReference type="InterPro" id="IPR031463">
    <property type="entry name" value="Mic12"/>
</dbReference>
<dbReference type="Pfam" id="PF17050">
    <property type="entry name" value="AIM5"/>
    <property type="match status" value="1"/>
</dbReference>
<sequence length="106" mass="12388">MSKLGPLARSVKWTLSVGVIGSVFYLYRYSNNGYFYDHDATWLKQDHQVQDLVDRKEVVPGETRNRKLVVTDDGTAWSRTMGESIKDIWNEQIRNSVDWIYSWGKN</sequence>